<reference key="1">
    <citation type="journal article" date="2011" name="Proc. Natl. Acad. Sci. U.S.A.">
        <title>Genomic anatomy of Escherichia coli O157:H7 outbreaks.</title>
        <authorList>
            <person name="Eppinger M."/>
            <person name="Mammel M.K."/>
            <person name="Leclerc J.E."/>
            <person name="Ravel J."/>
            <person name="Cebula T.A."/>
        </authorList>
    </citation>
    <scope>NUCLEOTIDE SEQUENCE [LARGE SCALE GENOMIC DNA]</scope>
    <source>
        <strain>EC4115 / EHEC</strain>
    </source>
</reference>
<name>FLIE_ECO5E</name>
<evidence type="ECO:0000255" key="1">
    <source>
        <dbReference type="HAMAP-Rule" id="MF_00724"/>
    </source>
</evidence>
<organism>
    <name type="scientific">Escherichia coli O157:H7 (strain EC4115 / EHEC)</name>
    <dbReference type="NCBI Taxonomy" id="444450"/>
    <lineage>
        <taxon>Bacteria</taxon>
        <taxon>Pseudomonadati</taxon>
        <taxon>Pseudomonadota</taxon>
        <taxon>Gammaproteobacteria</taxon>
        <taxon>Enterobacterales</taxon>
        <taxon>Enterobacteriaceae</taxon>
        <taxon>Escherichia</taxon>
    </lineage>
</organism>
<keyword id="KW-0975">Bacterial flagellum</keyword>
<gene>
    <name evidence="1" type="primary">fliE</name>
    <name type="ordered locus">ECH74115_2712</name>
</gene>
<comment type="subcellular location">
    <subcellularLocation>
        <location evidence="1">Bacterial flagellum basal body</location>
    </subcellularLocation>
</comment>
<comment type="similarity">
    <text evidence="1">Belongs to the FliE family.</text>
</comment>
<accession>B5YRW4</accession>
<feature type="chain" id="PRO_1000132654" description="Flagellar hook-basal body complex protein FliE">
    <location>
        <begin position="1"/>
        <end position="104"/>
    </location>
</feature>
<proteinExistence type="inferred from homology"/>
<protein>
    <recommendedName>
        <fullName evidence="1">Flagellar hook-basal body complex protein FliE</fullName>
    </recommendedName>
</protein>
<dbReference type="EMBL" id="CP001164">
    <property type="protein sequence ID" value="ACI34874.1"/>
    <property type="molecule type" value="Genomic_DNA"/>
</dbReference>
<dbReference type="RefSeq" id="WP_001274299.1">
    <property type="nucleotide sequence ID" value="NC_011353.1"/>
</dbReference>
<dbReference type="SMR" id="B5YRW4"/>
<dbReference type="GeneID" id="93775248"/>
<dbReference type="KEGG" id="ecf:ECH74115_2712"/>
<dbReference type="HOGENOM" id="CLU_147249_0_2_6"/>
<dbReference type="GO" id="GO:0009425">
    <property type="term" value="C:bacterial-type flagellum basal body"/>
    <property type="evidence" value="ECO:0007669"/>
    <property type="project" value="UniProtKB-SubCell"/>
</dbReference>
<dbReference type="GO" id="GO:0003774">
    <property type="term" value="F:cytoskeletal motor activity"/>
    <property type="evidence" value="ECO:0007669"/>
    <property type="project" value="InterPro"/>
</dbReference>
<dbReference type="GO" id="GO:0005198">
    <property type="term" value="F:structural molecule activity"/>
    <property type="evidence" value="ECO:0007669"/>
    <property type="project" value="InterPro"/>
</dbReference>
<dbReference type="GO" id="GO:0071973">
    <property type="term" value="P:bacterial-type flagellum-dependent cell motility"/>
    <property type="evidence" value="ECO:0007669"/>
    <property type="project" value="InterPro"/>
</dbReference>
<dbReference type="HAMAP" id="MF_00724">
    <property type="entry name" value="FliE"/>
    <property type="match status" value="1"/>
</dbReference>
<dbReference type="InterPro" id="IPR001624">
    <property type="entry name" value="FliE"/>
</dbReference>
<dbReference type="NCBIfam" id="TIGR00205">
    <property type="entry name" value="fliE"/>
    <property type="match status" value="1"/>
</dbReference>
<dbReference type="PANTHER" id="PTHR34653">
    <property type="match status" value="1"/>
</dbReference>
<dbReference type="PANTHER" id="PTHR34653:SF1">
    <property type="entry name" value="FLAGELLAR HOOK-BASAL BODY COMPLEX PROTEIN FLIE"/>
    <property type="match status" value="1"/>
</dbReference>
<dbReference type="Pfam" id="PF02049">
    <property type="entry name" value="FliE"/>
    <property type="match status" value="1"/>
</dbReference>
<dbReference type="PRINTS" id="PR01006">
    <property type="entry name" value="FLGHOOKFLIE"/>
</dbReference>
<sequence length="104" mass="11127">MSAIQGIEGVISQLQATAMSARAQESLPQPTISFAGQLHAALDRISDTQTAARTQAEKFTLGEPGVALNDVMTDMQKASVSMQMGIQVRNKLVAAYQEVMSMQV</sequence>